<gene>
    <name evidence="1" type="primary">Ak6</name>
    <name type="synonym">Cinap</name>
</gene>
<organism>
    <name type="scientific">Rattus norvegicus</name>
    <name type="common">Rat</name>
    <dbReference type="NCBI Taxonomy" id="10116"/>
    <lineage>
        <taxon>Eukaryota</taxon>
        <taxon>Metazoa</taxon>
        <taxon>Chordata</taxon>
        <taxon>Craniata</taxon>
        <taxon>Vertebrata</taxon>
        <taxon>Euteleostomi</taxon>
        <taxon>Mammalia</taxon>
        <taxon>Eutheria</taxon>
        <taxon>Euarchontoglires</taxon>
        <taxon>Glires</taxon>
        <taxon>Rodentia</taxon>
        <taxon>Myomorpha</taxon>
        <taxon>Muroidea</taxon>
        <taxon>Muridae</taxon>
        <taxon>Murinae</taxon>
        <taxon>Rattus</taxon>
    </lineage>
</organism>
<sequence>MKLPNILLTGTPGVGKTTLGKELASRSGLKYVNVGDLAREGHLYDGYDEEYGCPILDEDRVVDELEPQMTEGGVIVDYHGCDFFPERWFHIVFVLRTDNGILYKRLETRGYHEKKLQDNIQCEIFQVLYEEAMASYKEEIVHQLPSNEPEQLEDNINQISKWIEQWVKDHNP</sequence>
<proteinExistence type="evidence at transcript level"/>
<reference key="1">
    <citation type="submission" date="2005-12" db="EMBL/GenBank/DDBJ databases">
        <authorList>
            <person name="Miyoshi K."/>
            <person name="Sawatari M."/>
            <person name="Noma T."/>
        </authorList>
    </citation>
    <scope>NUCLEOTIDE SEQUENCE [MRNA]</scope>
    <source>
        <strain>SHRSP</strain>
    </source>
</reference>
<reference key="2">
    <citation type="journal article" date="2004" name="Genome Res.">
        <title>The status, quality, and expansion of the NIH full-length cDNA project: the Mammalian Gene Collection (MGC).</title>
        <authorList>
            <consortium name="The MGC Project Team"/>
        </authorList>
    </citation>
    <scope>NUCLEOTIDE SEQUENCE [LARGE SCALE MRNA]</scope>
    <source>
        <tissue>Brain</tissue>
    </source>
</reference>
<name>KAD6_RAT</name>
<keyword id="KW-0067">ATP-binding</keyword>
<keyword id="KW-0963">Cytoplasm</keyword>
<keyword id="KW-0418">Kinase</keyword>
<keyword id="KW-0547">Nucleotide-binding</keyword>
<keyword id="KW-0539">Nucleus</keyword>
<keyword id="KW-1185">Reference proteome</keyword>
<keyword id="KW-0690">Ribosome biogenesis</keyword>
<keyword id="KW-0698">rRNA processing</keyword>
<keyword id="KW-0808">Transferase</keyword>
<dbReference type="EC" id="2.7.4.3" evidence="1"/>
<dbReference type="EMBL" id="DQ323055">
    <property type="protein sequence ID" value="ABC50104.1"/>
    <property type="molecule type" value="mRNA"/>
</dbReference>
<dbReference type="EMBL" id="BC089989">
    <property type="protein sequence ID" value="AAH89989.1"/>
    <property type="molecule type" value="mRNA"/>
</dbReference>
<dbReference type="RefSeq" id="NP_001012481.1">
    <property type="nucleotide sequence ID" value="NM_001012463.3"/>
</dbReference>
<dbReference type="SMR" id="Q5EB68"/>
<dbReference type="FunCoup" id="Q5EB68">
    <property type="interactions" value="1643"/>
</dbReference>
<dbReference type="STRING" id="10116.ENSRNOP00000057879"/>
<dbReference type="iPTMnet" id="Q5EB68"/>
<dbReference type="PhosphoSitePlus" id="Q5EB68"/>
<dbReference type="PaxDb" id="10116-ENSRNOP00000057879"/>
<dbReference type="GeneID" id="102238592"/>
<dbReference type="KEGG" id="rno:102238592"/>
<dbReference type="AGR" id="RGD:7387335"/>
<dbReference type="CTD" id="102157402"/>
<dbReference type="RGD" id="7387335">
    <property type="gene designation" value="Ak6"/>
</dbReference>
<dbReference type="VEuPathDB" id="HostDB:ENSRNOG00000063018"/>
<dbReference type="eggNOG" id="KOG3347">
    <property type="taxonomic scope" value="Eukaryota"/>
</dbReference>
<dbReference type="HOGENOM" id="CLU_079096_3_1_1"/>
<dbReference type="InParanoid" id="Q5EB68"/>
<dbReference type="Reactome" id="R-RNO-499943">
    <property type="pathway name" value="Interconversion of nucleotide di- and triphosphates"/>
</dbReference>
<dbReference type="PRO" id="PR:Q5EB68"/>
<dbReference type="Proteomes" id="UP000002494">
    <property type="component" value="Chromosome 2"/>
</dbReference>
<dbReference type="Bgee" id="ENSRNOG00000039848">
    <property type="expression patterns" value="Expressed in thymus and 19 other cell types or tissues"/>
</dbReference>
<dbReference type="ExpressionAtlas" id="Q5EB68">
    <property type="expression patterns" value="baseline and differential"/>
</dbReference>
<dbReference type="GO" id="GO:0015030">
    <property type="term" value="C:Cajal body"/>
    <property type="evidence" value="ECO:0000250"/>
    <property type="project" value="UniProtKB"/>
</dbReference>
<dbReference type="GO" id="GO:0005737">
    <property type="term" value="C:cytoplasm"/>
    <property type="evidence" value="ECO:0000318"/>
    <property type="project" value="GO_Central"/>
</dbReference>
<dbReference type="GO" id="GO:0005654">
    <property type="term" value="C:nucleoplasm"/>
    <property type="evidence" value="ECO:0000250"/>
    <property type="project" value="UniProtKB"/>
</dbReference>
<dbReference type="GO" id="GO:0005634">
    <property type="term" value="C:nucleus"/>
    <property type="evidence" value="ECO:0000318"/>
    <property type="project" value="GO_Central"/>
</dbReference>
<dbReference type="GO" id="GO:0004017">
    <property type="term" value="F:adenylate kinase activity"/>
    <property type="evidence" value="ECO:0000250"/>
    <property type="project" value="UniProtKB"/>
</dbReference>
<dbReference type="GO" id="GO:0005524">
    <property type="term" value="F:ATP binding"/>
    <property type="evidence" value="ECO:0000318"/>
    <property type="project" value="GO_Central"/>
</dbReference>
<dbReference type="GO" id="GO:0016887">
    <property type="term" value="F:ATP hydrolysis activity"/>
    <property type="evidence" value="ECO:0007669"/>
    <property type="project" value="UniProtKB-UniRule"/>
</dbReference>
<dbReference type="GO" id="GO:0042274">
    <property type="term" value="P:ribosomal small subunit biogenesis"/>
    <property type="evidence" value="ECO:0007669"/>
    <property type="project" value="UniProtKB-UniRule"/>
</dbReference>
<dbReference type="GO" id="GO:0006364">
    <property type="term" value="P:rRNA processing"/>
    <property type="evidence" value="ECO:0007669"/>
    <property type="project" value="UniProtKB-KW"/>
</dbReference>
<dbReference type="FunFam" id="3.40.50.300:FF:003001">
    <property type="entry name" value="Adenylate kinase isoenzyme 6"/>
    <property type="match status" value="1"/>
</dbReference>
<dbReference type="Gene3D" id="3.40.50.300">
    <property type="entry name" value="P-loop containing nucleotide triphosphate hydrolases"/>
    <property type="match status" value="1"/>
</dbReference>
<dbReference type="HAMAP" id="MF_00039">
    <property type="entry name" value="Adenylate_kinase_AK6"/>
    <property type="match status" value="1"/>
</dbReference>
<dbReference type="InterPro" id="IPR020618">
    <property type="entry name" value="Adenyl_kinase_AK6"/>
</dbReference>
<dbReference type="InterPro" id="IPR027417">
    <property type="entry name" value="P-loop_NTPase"/>
</dbReference>
<dbReference type="PANTHER" id="PTHR12595:SF0">
    <property type="entry name" value="ADENYLATE KINASE ISOENZYME 6"/>
    <property type="match status" value="1"/>
</dbReference>
<dbReference type="PANTHER" id="PTHR12595">
    <property type="entry name" value="POS9-ACTIVATING FACTOR FAP7-RELATED"/>
    <property type="match status" value="1"/>
</dbReference>
<dbReference type="Pfam" id="PF13238">
    <property type="entry name" value="AAA_18"/>
    <property type="match status" value="1"/>
</dbReference>
<dbReference type="SUPFAM" id="SSF52540">
    <property type="entry name" value="P-loop containing nucleoside triphosphate hydrolases"/>
    <property type="match status" value="1"/>
</dbReference>
<comment type="function">
    <text evidence="1">Broad-specificity nucleoside monophosphate (NMP) kinase that catalyzes the reversible transfer of the terminal phosphate group between nucleoside triphosphates and monophosphates. Also has ATPase activity. Involved in the late cytoplasmic maturation steps of the 40S ribosomal particles, specifically 18S rRNA maturation. While NMP activity is not required for ribosome maturation, ATPase activity is. Associates transiently with small ribosomal subunit protein uS11. ATP hydrolysis breaks the interaction with uS11. May temporarily remove uS11 from the ribosome to enable a conformational change of the ribosomal RNA that is needed for the final maturation step of the small ribosomal subunit. Its NMP activity may have a role in nuclear energy homeostasis. May be involved in regulation of Cajal body (CB) formation.</text>
</comment>
<comment type="catalytic activity">
    <reaction evidence="1">
        <text>AMP + ATP = 2 ADP</text>
        <dbReference type="Rhea" id="RHEA:12973"/>
        <dbReference type="ChEBI" id="CHEBI:30616"/>
        <dbReference type="ChEBI" id="CHEBI:456215"/>
        <dbReference type="ChEBI" id="CHEBI:456216"/>
        <dbReference type="EC" id="2.7.4.3"/>
    </reaction>
</comment>
<comment type="catalytic activity">
    <reaction evidence="1">
        <text>ATP + H2O = ADP + phosphate + H(+)</text>
        <dbReference type="Rhea" id="RHEA:13065"/>
        <dbReference type="ChEBI" id="CHEBI:15377"/>
        <dbReference type="ChEBI" id="CHEBI:15378"/>
        <dbReference type="ChEBI" id="CHEBI:30616"/>
        <dbReference type="ChEBI" id="CHEBI:43474"/>
        <dbReference type="ChEBI" id="CHEBI:456216"/>
    </reaction>
</comment>
<comment type="subunit">
    <text evidence="1">Monomer and homodimer. Interacts with small ribosomal subunit protein uS11. Not a structural component of 43S pre-ribosomes, but transiently interacts with them by binding to uS11. Interacts with COIL (via C-terminus).</text>
</comment>
<comment type="subcellular location">
    <subcellularLocation>
        <location evidence="1">Cytoplasm</location>
    </subcellularLocation>
    <subcellularLocation>
        <location evidence="1">Nucleus</location>
        <location evidence="1">Nucleoplasm</location>
    </subcellularLocation>
    <subcellularLocation>
        <location evidence="1">Nucleus</location>
        <location evidence="1">Cajal body</location>
    </subcellularLocation>
    <text evidence="1">Displays widespread diffuse nucleoplasmic distribution but not detected in nucleoli. Detected in Cajal bodies but not in all cells.</text>
</comment>
<comment type="similarity">
    <text evidence="1">Belongs to the adenylate kinase family. AK6 subfamily.</text>
</comment>
<comment type="caution">
    <text evidence="2">AK6 and TAF9 were initially considered as products of the same gene since they share two exons. However, they are translated from different initiation codons and reading frames and encode unrelated proteins. This arrangement is conserved in some mammalian species.</text>
</comment>
<evidence type="ECO:0000255" key="1">
    <source>
        <dbReference type="HAMAP-Rule" id="MF_03173"/>
    </source>
</evidence>
<evidence type="ECO:0000305" key="2"/>
<accession>Q5EB68</accession>
<accession>A6XB81</accession>
<feature type="chain" id="PRO_0000153899" description="Adenylate kinase isoenzyme 6">
    <location>
        <begin position="1"/>
        <end position="172"/>
    </location>
</feature>
<feature type="region of interest" description="NMPbind" evidence="1">
    <location>
        <begin position="33"/>
        <end position="56"/>
    </location>
</feature>
<feature type="region of interest" description="LID" evidence="1">
    <location>
        <begin position="108"/>
        <end position="118"/>
    </location>
</feature>
<feature type="binding site" evidence="1">
    <location>
        <position position="13"/>
    </location>
    <ligand>
        <name>ATP</name>
        <dbReference type="ChEBI" id="CHEBI:30616"/>
    </ligand>
</feature>
<feature type="binding site" evidence="1">
    <location>
        <position position="15"/>
    </location>
    <ligand>
        <name>ATP</name>
        <dbReference type="ChEBI" id="CHEBI:30616"/>
    </ligand>
</feature>
<feature type="binding site" evidence="1">
    <location>
        <position position="16"/>
    </location>
    <ligand>
        <name>ATP</name>
        <dbReference type="ChEBI" id="CHEBI:30616"/>
    </ligand>
</feature>
<feature type="binding site" evidence="1">
    <location>
        <position position="17"/>
    </location>
    <ligand>
        <name>ATP</name>
        <dbReference type="ChEBI" id="CHEBI:30616"/>
    </ligand>
</feature>
<feature type="binding site" evidence="1">
    <location>
        <position position="18"/>
    </location>
    <ligand>
        <name>ATP</name>
        <dbReference type="ChEBI" id="CHEBI:30616"/>
    </ligand>
</feature>
<feature type="binding site" evidence="1">
    <location>
        <position position="109"/>
    </location>
    <ligand>
        <name>ATP</name>
        <dbReference type="ChEBI" id="CHEBI:30616"/>
    </ligand>
</feature>
<protein>
    <recommendedName>
        <fullName evidence="1">Adenylate kinase isoenzyme 6</fullName>
        <shortName evidence="1">AK6</shortName>
        <ecNumber evidence="1">2.7.4.3</ecNumber>
    </recommendedName>
    <alternativeName>
        <fullName evidence="1">Coilin-interacting nuclear ATPase protein</fullName>
    </alternativeName>
    <alternativeName>
        <fullName evidence="1">Dual activity adenylate kinase/ATPase</fullName>
        <shortName evidence="1">AK/ATPase</shortName>
    </alternativeName>
</protein>